<gene>
    <name type="primary">Tex29</name>
</gene>
<keyword id="KW-0472">Membrane</keyword>
<keyword id="KW-1185">Reference proteome</keyword>
<keyword id="KW-0812">Transmembrane</keyword>
<keyword id="KW-1133">Transmembrane helix</keyword>
<proteinExistence type="evidence at transcript level"/>
<sequence length="182" mass="19940">MRYTTDIKKSPPQLLKTFAVCDISLYDICDYNVTRDQCKELGCCFYKGVCYKKVVPIYVQMFSTLIVLVTGIIIITIIYRIVQEIKRQMKLSMNSTPKASKKRSAFRPFSRDPSRAPSRSPSRTSSTLSSRSPTTAPTTAPTTDPATDPATDPATDPATDPATDPATDPATAPPTDPSENPP</sequence>
<organism>
    <name type="scientific">Rattus norvegicus</name>
    <name type="common">Rat</name>
    <dbReference type="NCBI Taxonomy" id="10116"/>
    <lineage>
        <taxon>Eukaryota</taxon>
        <taxon>Metazoa</taxon>
        <taxon>Chordata</taxon>
        <taxon>Craniata</taxon>
        <taxon>Vertebrata</taxon>
        <taxon>Euteleostomi</taxon>
        <taxon>Mammalia</taxon>
        <taxon>Eutheria</taxon>
        <taxon>Euarchontoglires</taxon>
        <taxon>Glires</taxon>
        <taxon>Rodentia</taxon>
        <taxon>Myomorpha</taxon>
        <taxon>Muroidea</taxon>
        <taxon>Muridae</taxon>
        <taxon>Murinae</taxon>
        <taxon>Rattus</taxon>
    </lineage>
</organism>
<protein>
    <recommendedName>
        <fullName>Testis-expressed protein 29</fullName>
    </recommendedName>
</protein>
<name>TEX29_RAT</name>
<comment type="subcellular location">
    <subcellularLocation>
        <location evidence="3">Membrane</location>
        <topology evidence="3">Single-pass membrane protein</topology>
    </subcellularLocation>
</comment>
<evidence type="ECO:0000255" key="1"/>
<evidence type="ECO:0000256" key="2">
    <source>
        <dbReference type="SAM" id="MobiDB-lite"/>
    </source>
</evidence>
<evidence type="ECO:0000305" key="3"/>
<reference key="1">
    <citation type="journal article" date="2004" name="Genome Res.">
        <title>The status, quality, and expansion of the NIH full-length cDNA project: the Mammalian Gene Collection (MGC).</title>
        <authorList>
            <consortium name="The MGC Project Team"/>
        </authorList>
    </citation>
    <scope>NUCLEOTIDE SEQUENCE [LARGE SCALE MRNA]</scope>
    <source>
        <tissue>Testis</tissue>
    </source>
</reference>
<feature type="chain" id="PRO_0000358918" description="Testis-expressed protein 29">
    <location>
        <begin position="1"/>
        <end position="182"/>
    </location>
</feature>
<feature type="topological domain" description="Extracellular" evidence="1">
    <location>
        <begin position="1"/>
        <end position="56"/>
    </location>
</feature>
<feature type="transmembrane region" description="Helical" evidence="1">
    <location>
        <begin position="57"/>
        <end position="77"/>
    </location>
</feature>
<feature type="topological domain" description="Cytoplasmic" evidence="1">
    <location>
        <begin position="78"/>
        <end position="182"/>
    </location>
</feature>
<feature type="region of interest" description="Disordered" evidence="2">
    <location>
        <begin position="91"/>
        <end position="182"/>
    </location>
</feature>
<feature type="compositionally biased region" description="Low complexity" evidence="2">
    <location>
        <begin position="115"/>
        <end position="170"/>
    </location>
</feature>
<feature type="compositionally biased region" description="Pro residues" evidence="2">
    <location>
        <begin position="171"/>
        <end position="182"/>
    </location>
</feature>
<accession>Q6AXY3</accession>
<dbReference type="EMBL" id="BC079268">
    <property type="protein sequence ID" value="AAH79268.1"/>
    <property type="molecule type" value="mRNA"/>
</dbReference>
<dbReference type="RefSeq" id="NP_001017508.1">
    <property type="nucleotide sequence ID" value="NM_001017508.3"/>
</dbReference>
<dbReference type="RefSeq" id="NP_001401970.1">
    <property type="nucleotide sequence ID" value="NM_001415041.1"/>
</dbReference>
<dbReference type="STRING" id="10116.ENSRNOP00000072533"/>
<dbReference type="PaxDb" id="10116-ENSRNOP00000042289"/>
<dbReference type="GeneID" id="498664"/>
<dbReference type="KEGG" id="rno:498664"/>
<dbReference type="UCSC" id="RGD:1565377">
    <property type="organism name" value="rat"/>
</dbReference>
<dbReference type="AGR" id="RGD:1565377"/>
<dbReference type="CTD" id="121793"/>
<dbReference type="RGD" id="1565377">
    <property type="gene designation" value="Tex29"/>
</dbReference>
<dbReference type="VEuPathDB" id="HostDB:ENSRNOG00000033585"/>
<dbReference type="eggNOG" id="ENOG502RWPU">
    <property type="taxonomic scope" value="Eukaryota"/>
</dbReference>
<dbReference type="InParanoid" id="Q6AXY3"/>
<dbReference type="TreeFam" id="TF337066"/>
<dbReference type="PRO" id="PR:Q6AXY3"/>
<dbReference type="Proteomes" id="UP000002494">
    <property type="component" value="Chromosome 16"/>
</dbReference>
<dbReference type="Bgee" id="ENSRNOG00000033585">
    <property type="expression patterns" value="Expressed in testis"/>
</dbReference>
<dbReference type="ExpressionAtlas" id="Q6AXY3">
    <property type="expression patterns" value="differential"/>
</dbReference>
<dbReference type="GO" id="GO:0016020">
    <property type="term" value="C:membrane"/>
    <property type="evidence" value="ECO:0007669"/>
    <property type="project" value="UniProtKB-SubCell"/>
</dbReference>
<dbReference type="InterPro" id="IPR031685">
    <property type="entry name" value="TEX29"/>
</dbReference>
<dbReference type="PANTHER" id="PTHR37339">
    <property type="entry name" value="TESTIS-EXPRESSED PROTEIN 29"/>
    <property type="match status" value="1"/>
</dbReference>
<dbReference type="PANTHER" id="PTHR37339:SF1">
    <property type="entry name" value="TESTIS-EXPRESSED PROTEIN 29"/>
    <property type="match status" value="1"/>
</dbReference>
<dbReference type="Pfam" id="PF15839">
    <property type="entry name" value="TEX29"/>
    <property type="match status" value="1"/>
</dbReference>